<dbReference type="TCDB" id="1.C.118.1.2">
    <property type="family name" value="the mastoparin peptide 1 (mpp1) family"/>
</dbReference>
<dbReference type="GO" id="GO:0005576">
    <property type="term" value="C:extracellular region"/>
    <property type="evidence" value="ECO:0007669"/>
    <property type="project" value="UniProtKB-SubCell"/>
</dbReference>
<dbReference type="GO" id="GO:0016020">
    <property type="term" value="C:membrane"/>
    <property type="evidence" value="ECO:0007669"/>
    <property type="project" value="UniProtKB-KW"/>
</dbReference>
<dbReference type="GO" id="GO:0044218">
    <property type="term" value="C:other organism cell membrane"/>
    <property type="evidence" value="ECO:0007669"/>
    <property type="project" value="UniProtKB-KW"/>
</dbReference>
<dbReference type="GO" id="GO:0090729">
    <property type="term" value="F:toxin activity"/>
    <property type="evidence" value="ECO:0007669"/>
    <property type="project" value="UniProtKB-KW"/>
</dbReference>
<dbReference type="GO" id="GO:0042742">
    <property type="term" value="P:defense response to bacterium"/>
    <property type="evidence" value="ECO:0007669"/>
    <property type="project" value="UniProtKB-KW"/>
</dbReference>
<dbReference type="GO" id="GO:0045087">
    <property type="term" value="P:innate immune response"/>
    <property type="evidence" value="ECO:0007669"/>
    <property type="project" value="UniProtKB-KW"/>
</dbReference>
<proteinExistence type="evidence at protein level"/>
<feature type="peptide" id="PRO_0000247264" description="Protonectarina mastoparan" evidence="4">
    <location>
        <begin position="1"/>
        <end position="14"/>
    </location>
</feature>
<feature type="site" description="Positioned outside of zwitterionic and anionic membranes most of the time" evidence="3">
    <location>
        <position position="1"/>
    </location>
</feature>
<feature type="site" description="Embedded in zwitterionic and anionic membranes most of the time" evidence="3">
    <location>
        <position position="3"/>
    </location>
</feature>
<feature type="site" description="Amidated C-terminal residue positioned outside of zwitterionic and anionic membranes most of the time" evidence="3">
    <location>
        <position position="14"/>
    </location>
</feature>
<feature type="modified residue" description="Leucine amide" evidence="4">
    <location>
        <position position="14"/>
    </location>
</feature>
<keyword id="KW-0027">Amidation</keyword>
<keyword id="KW-0044">Antibiotic</keyword>
<keyword id="KW-0929">Antimicrobial</keyword>
<keyword id="KW-0903">Direct protein sequencing</keyword>
<keyword id="KW-1213">G-protein coupled receptor impairing toxin</keyword>
<keyword id="KW-0391">Immunity</keyword>
<keyword id="KW-0399">Innate immunity</keyword>
<keyword id="KW-0467">Mast cell degranulation</keyword>
<keyword id="KW-0472">Membrane</keyword>
<keyword id="KW-0964">Secreted</keyword>
<keyword id="KW-1052">Target cell membrane</keyword>
<keyword id="KW-1053">Target membrane</keyword>
<keyword id="KW-0800">Toxin</keyword>
<accession>P0C1Q5</accession>
<protein>
    <recommendedName>
        <fullName evidence="5">Protonectarina mastoparan</fullName>
        <shortName evidence="5">Protonectarina-MP</shortName>
    </recommendedName>
</protein>
<organism>
    <name type="scientific">Protonectarina sylveirae</name>
    <name type="common">Brazilian wasp</name>
    <dbReference type="NCBI Taxonomy" id="91438"/>
    <lineage>
        <taxon>Eukaryota</taxon>
        <taxon>Metazoa</taxon>
        <taxon>Ecdysozoa</taxon>
        <taxon>Arthropoda</taxon>
        <taxon>Hexapoda</taxon>
        <taxon>Insecta</taxon>
        <taxon>Pterygota</taxon>
        <taxon>Neoptera</taxon>
        <taxon>Endopterygota</taxon>
        <taxon>Hymenoptera</taxon>
        <taxon>Apocrita</taxon>
        <taxon>Aculeata</taxon>
        <taxon>Vespoidea</taxon>
        <taxon>Vespidae</taxon>
        <taxon>Polistinae</taxon>
        <taxon>Epiponini</taxon>
        <taxon>Protonectarina</taxon>
    </lineage>
</organism>
<name>MASTP_PROSY</name>
<sequence length="14" mass="1583">INWKALLDAAKKVL</sequence>
<evidence type="ECO:0000250" key="1">
    <source>
        <dbReference type="UniProtKB" id="P01514"/>
    </source>
</evidence>
<evidence type="ECO:0000250" key="2">
    <source>
        <dbReference type="UniProtKB" id="P84914"/>
    </source>
</evidence>
<evidence type="ECO:0000269" key="3">
    <source>
    </source>
</evidence>
<evidence type="ECO:0000269" key="4">
    <source>
    </source>
</evidence>
<evidence type="ECO:0000303" key="5">
    <source>
    </source>
</evidence>
<evidence type="ECO:0000305" key="6"/>
<evidence type="ECO:0000305" key="7">
    <source>
    </source>
</evidence>
<evidence type="ECO:0000305" key="8">
    <source>
    </source>
</evidence>
<reference key="1">
    <citation type="journal article" date="1993" name="Nat. Toxins">
        <title>Isolation and sequence analysis of peptides from the venom of Protonectarina sylveirae (Hymenoptera-Vespidae).</title>
        <authorList>
            <person name="Dohtsu K."/>
            <person name="Okumura K."/>
            <person name="Hagiwara K."/>
            <person name="Palma M.S."/>
            <person name="Nakajima T."/>
        </authorList>
    </citation>
    <scope>PROTEIN SEQUENCE</scope>
    <scope>FUNCTION</scope>
    <scope>IDENTIFICATION BY MASS SPECTROMETRY</scope>
    <scope>AMIDATION AT LEU-14</scope>
    <scope>SUBCELLULAR LOCATION</scope>
    <source>
        <tissue>Venom</tissue>
    </source>
</reference>
<reference key="2">
    <citation type="journal article" date="2014" name="Biochim. Biophys. Acta">
        <title>The effects of the C-terminal amidation of mastoparans on their biological actions and interactions with membrane-mimetic systems.</title>
        <authorList>
            <person name="da Silva A.V."/>
            <person name="De Souza B.M."/>
            <person name="Dos Santos Cabrera M.P."/>
            <person name="Dias N.B."/>
            <person name="Gomes P.C."/>
            <person name="Neto J.R."/>
            <person name="Stabeli R.G."/>
            <person name="Palma M.S."/>
        </authorList>
    </citation>
    <scope>FUNCTION</scope>
    <scope>SUBCELLULAR LOCATION</scope>
    <scope>ROLE OF C-TERMINAL AMIDATION</scope>
    <scope>SYNTHESIS</scope>
    <scope>CD SPECTROSCOPY</scope>
    <scope>3D-STRUCTURE MODELING</scope>
</reference>
<comment type="function">
    <text evidence="1 2 3 4">Potent antimicrobial peptide and potent mast cell degranulating peptide (PubMed:24955498, PubMed:7513243). Is active on both Gram-negative bacteria (E.coli MIC=7.8 ug/ml, and P.aeruginosa MIC=62.5 ug/ml) and Gram-positive bacteria (S.aureus MIC=15.6 ug/ml, and B.cereus MIC=7.8 ug/ml) (PubMed:24955498). Its mast cell degranulation activity may be related to the activation of G-protein coupled receptors in mast cells as well as interaction with other proteins located in cell endosomal membranes in the mast cells (By similarity). Shows a reduced level of hemolytic activity on rat erythrocytes (PubMed:24955498, PubMed:7513243). Interacts with both zwitterionic and anionic membranes, with 3 to 5 residues embedded into these two types of membrane (PubMed:24955498). Its lytic activity appears to be influenced by the ionic character of the bilayer (PubMed:24955498).</text>
</comment>
<comment type="subcellular location">
    <subcellularLocation>
        <location evidence="4">Secreted</location>
    </subcellularLocation>
    <subcellularLocation>
        <location evidence="3">Target cell membrane</location>
    </subcellularLocation>
    <text evidence="7">Assumes an amphipathic alpha-helical conformation in a membrane-like environment (Probable). Interacts in parallel to the membrane surface without being fully internalized (Probable).</text>
</comment>
<comment type="tissue specificity">
    <text evidence="8">Expressed by the venom gland.</text>
</comment>
<comment type="PTM">
    <text evidence="3">C-terminal amidation is important for the stabilization of the secondary structure in alpha-helical conformation and for activity (PubMed:24955498). The non-amidated analog Protonectarina-MP-OH has a lower level of alpha helical structure than the amidated peptide, as well as a reduced mast cell degranulation activity, a complete loss of hemolytic activity, and a much more reduced antimicrobial activity compared to the amidated peptide (PubMed:24955498).</text>
</comment>
<comment type="similarity">
    <text evidence="6">Belongs to the MCD family. Mastoparan subfamily.</text>
</comment>